<organism>
    <name type="scientific">Rattus norvegicus</name>
    <name type="common">Rat</name>
    <dbReference type="NCBI Taxonomy" id="10116"/>
    <lineage>
        <taxon>Eukaryota</taxon>
        <taxon>Metazoa</taxon>
        <taxon>Chordata</taxon>
        <taxon>Craniata</taxon>
        <taxon>Vertebrata</taxon>
        <taxon>Euteleostomi</taxon>
        <taxon>Mammalia</taxon>
        <taxon>Eutheria</taxon>
        <taxon>Euarchontoglires</taxon>
        <taxon>Glires</taxon>
        <taxon>Rodentia</taxon>
        <taxon>Myomorpha</taxon>
        <taxon>Muroidea</taxon>
        <taxon>Muridae</taxon>
        <taxon>Murinae</taxon>
        <taxon>Rattus</taxon>
    </lineage>
</organism>
<protein>
    <recommendedName>
        <fullName>Excitatory amino acid transporter 1</fullName>
    </recommendedName>
    <alternativeName>
        <fullName>Glial glutamate transporter</fullName>
    </alternativeName>
    <alternativeName>
        <fullName evidence="10">Sodium-dependent glutamate/aspartate transporter 1</fullName>
        <shortName evidence="11">GLAST</shortName>
        <shortName evidence="10">GLAST-1</shortName>
    </alternativeName>
    <alternativeName>
        <fullName>Solute carrier family 1 member 3</fullName>
    </alternativeName>
</protein>
<feature type="chain" id="PRO_0000202059" description="Excitatory amino acid transporter 1">
    <location>
        <begin position="1"/>
        <end position="543"/>
    </location>
</feature>
<feature type="topological domain" description="Cytoplasmic" evidence="12">
    <location>
        <begin position="1"/>
        <end position="47"/>
    </location>
</feature>
<feature type="transmembrane region" description="Helical; Name=1" evidence="3">
    <location>
        <begin position="48"/>
        <end position="68"/>
    </location>
</feature>
<feature type="topological domain" description="Extracellular" evidence="12">
    <location>
        <begin position="69"/>
        <end position="86"/>
    </location>
</feature>
<feature type="transmembrane region" description="Helical; Name=2" evidence="3">
    <location>
        <begin position="87"/>
        <end position="108"/>
    </location>
</feature>
<feature type="topological domain" description="Cytoplasmic" evidence="12">
    <location>
        <begin position="109"/>
        <end position="122"/>
    </location>
</feature>
<feature type="transmembrane region" description="Helical; Name=3" evidence="3">
    <location>
        <begin position="123"/>
        <end position="145"/>
    </location>
</feature>
<feature type="topological domain" description="Extracellular" evidence="12">
    <location>
        <begin position="146"/>
        <end position="236"/>
    </location>
</feature>
<feature type="transmembrane region" description="Helical; Name=4" evidence="3">
    <location>
        <begin position="237"/>
        <end position="260"/>
    </location>
</feature>
<feature type="topological domain" description="Cytoplasmic" evidence="12">
    <location>
        <begin position="261"/>
        <end position="269"/>
    </location>
</feature>
<feature type="transmembrane region" description="Helical; Name=5" evidence="3">
    <location>
        <begin position="270"/>
        <end position="297"/>
    </location>
</feature>
<feature type="topological domain" description="Extracellular" evidence="12">
    <location>
        <begin position="298"/>
        <end position="318"/>
    </location>
</feature>
<feature type="transmembrane region" description="Helical; Name=6" evidence="3">
    <location>
        <begin position="319"/>
        <end position="340"/>
    </location>
</feature>
<feature type="topological domain" description="Cytoplasmic" evidence="12">
    <location>
        <begin position="341"/>
        <end position="345"/>
    </location>
</feature>
<feature type="intramembrane region" description="Discontinuously helical" evidence="3">
    <location>
        <begin position="346"/>
        <end position="376"/>
    </location>
</feature>
<feature type="topological domain" description="Cytoplasmic" evidence="12">
    <location>
        <begin position="377"/>
        <end position="385"/>
    </location>
</feature>
<feature type="transmembrane region" description="Helical; Name=7" evidence="3">
    <location>
        <begin position="386"/>
        <end position="412"/>
    </location>
</feature>
<feature type="topological domain" description="Extracellular" evidence="12">
    <location>
        <begin position="413"/>
        <end position="425"/>
    </location>
</feature>
<feature type="intramembrane region" description="Discontinuously helical" evidence="3">
    <location>
        <begin position="426"/>
        <end position="459"/>
    </location>
</feature>
<feature type="topological domain" description="Extracellular" evidence="12">
    <location>
        <begin position="460"/>
        <end position="472"/>
    </location>
</feature>
<feature type="transmembrane region" description="Helical; Name=8" evidence="3">
    <location>
        <begin position="473"/>
        <end position="494"/>
    </location>
</feature>
<feature type="topological domain" description="Cytoplasmic" evidence="12">
    <location>
        <begin position="495"/>
        <end position="543"/>
    </location>
</feature>
<feature type="region of interest" description="Disordered" evidence="5">
    <location>
        <begin position="522"/>
        <end position="543"/>
    </location>
</feature>
<feature type="compositionally biased region" description="Basic and acidic residues" evidence="5">
    <location>
        <begin position="531"/>
        <end position="543"/>
    </location>
</feature>
<feature type="binding site" evidence="2">
    <location>
        <begin position="363"/>
        <end position="365"/>
    </location>
    <ligand>
        <name>L-aspartate</name>
        <dbReference type="ChEBI" id="CHEBI:29991"/>
    </ligand>
</feature>
<feature type="binding site" evidence="2">
    <location>
        <position position="394"/>
    </location>
    <ligand>
        <name>Na(+)</name>
        <dbReference type="ChEBI" id="CHEBI:29101"/>
        <label>1</label>
    </ligand>
</feature>
<feature type="binding site" evidence="2">
    <location>
        <position position="396"/>
    </location>
    <ligand>
        <name>Na(+)</name>
        <dbReference type="ChEBI" id="CHEBI:29101"/>
        <label>2</label>
    </ligand>
</feature>
<feature type="binding site" evidence="2">
    <location>
        <position position="398"/>
    </location>
    <ligand>
        <name>Na(+)</name>
        <dbReference type="ChEBI" id="CHEBI:29101"/>
        <label>1</label>
    </ligand>
</feature>
<feature type="binding site" evidence="2">
    <location>
        <position position="402"/>
    </location>
    <ligand>
        <name>L-aspartate</name>
        <dbReference type="ChEBI" id="CHEBI:29991"/>
    </ligand>
</feature>
<feature type="binding site" evidence="3">
    <location>
        <begin position="443"/>
        <end position="447"/>
    </location>
    <ligand>
        <name>L-aspartate</name>
        <dbReference type="ChEBI" id="CHEBI:29991"/>
    </ligand>
</feature>
<feature type="binding site" evidence="2">
    <location>
        <position position="476"/>
    </location>
    <ligand>
        <name>L-aspartate</name>
        <dbReference type="ChEBI" id="CHEBI:29991"/>
    </ligand>
</feature>
<feature type="binding site" evidence="2">
    <location>
        <position position="483"/>
    </location>
    <ligand>
        <name>L-aspartate</name>
        <dbReference type="ChEBI" id="CHEBI:29991"/>
    </ligand>
</feature>
<feature type="binding site" evidence="2">
    <location>
        <position position="483"/>
    </location>
    <ligand>
        <name>Na(+)</name>
        <dbReference type="ChEBI" id="CHEBI:29101"/>
        <label>1</label>
    </ligand>
</feature>
<feature type="binding site" evidence="2">
    <location>
        <position position="487"/>
    </location>
    <ligand>
        <name>Na(+)</name>
        <dbReference type="ChEBI" id="CHEBI:29101"/>
        <label>1</label>
    </ligand>
</feature>
<feature type="modified residue" description="Phosphoserine" evidence="13">
    <location>
        <position position="512"/>
    </location>
</feature>
<feature type="splice variant" id="VSP_006263" description="In isoform GLAST-1A." evidence="12">
    <location>
        <begin position="62"/>
        <end position="107"/>
    </location>
</feature>
<feature type="sequence variant" evidence="6">
    <original>L</original>
    <variation>V</variation>
    <location>
        <position position="302"/>
    </location>
</feature>
<dbReference type="EMBL" id="X63744">
    <property type="protein sequence ID" value="CAA45276.1"/>
    <property type="molecule type" value="mRNA"/>
</dbReference>
<dbReference type="EMBL" id="S59158">
    <property type="protein sequence ID" value="AAB26422.1"/>
    <property type="molecule type" value="mRNA"/>
</dbReference>
<dbReference type="EMBL" id="AF265360">
    <property type="protein sequence ID" value="AAF73069.1"/>
    <property type="molecule type" value="mRNA"/>
</dbReference>
<dbReference type="EMBL" id="S75687">
    <property type="protein sequence ID" value="AAB32664.1"/>
    <property type="molecule type" value="mRNA"/>
</dbReference>
<dbReference type="PIR" id="S26609">
    <property type="entry name" value="S26609"/>
</dbReference>
<dbReference type="RefSeq" id="NP_001276870.1">
    <property type="nucleotide sequence ID" value="NM_001289941.1"/>
</dbReference>
<dbReference type="RefSeq" id="NP_001276871.1">
    <property type="nucleotide sequence ID" value="NM_001289942.1"/>
</dbReference>
<dbReference type="RefSeq" id="NP_001276872.1">
    <property type="nucleotide sequence ID" value="NM_001289943.1"/>
</dbReference>
<dbReference type="RefSeq" id="NP_062098.1">
    <property type="nucleotide sequence ID" value="NM_019225.2"/>
</dbReference>
<dbReference type="SMR" id="P24942"/>
<dbReference type="BioGRID" id="248125">
    <property type="interactions" value="3"/>
</dbReference>
<dbReference type="FunCoup" id="P24942">
    <property type="interactions" value="830"/>
</dbReference>
<dbReference type="IntAct" id="P24942">
    <property type="interactions" value="2"/>
</dbReference>
<dbReference type="MINT" id="P24942"/>
<dbReference type="STRING" id="10116.ENSRNOP00000022319"/>
<dbReference type="BindingDB" id="P24942"/>
<dbReference type="ChEMBL" id="CHEMBL4190"/>
<dbReference type="GuidetoPHARMACOLOGY" id="868"/>
<dbReference type="TCDB" id="2.A.23.2.1">
    <property type="family name" value="the dicarboxylate/amino acid:cation (na(+) or h(+)) symporter (daacs) family"/>
</dbReference>
<dbReference type="GlyGen" id="P24942">
    <property type="glycosylation" value="3 sites"/>
</dbReference>
<dbReference type="iPTMnet" id="P24942"/>
<dbReference type="PhosphoSitePlus" id="P24942"/>
<dbReference type="SwissPalm" id="P24942"/>
<dbReference type="PaxDb" id="10116-ENSRNOP00000022319"/>
<dbReference type="GeneID" id="29483"/>
<dbReference type="KEGG" id="rno:29483"/>
<dbReference type="AGR" id="RGD:3698"/>
<dbReference type="CTD" id="6507"/>
<dbReference type="RGD" id="3698">
    <property type="gene designation" value="Slc1a3"/>
</dbReference>
<dbReference type="eggNOG" id="KOG3787">
    <property type="taxonomic scope" value="Eukaryota"/>
</dbReference>
<dbReference type="InParanoid" id="P24942"/>
<dbReference type="OrthoDB" id="5877963at2759"/>
<dbReference type="PhylomeDB" id="P24942"/>
<dbReference type="Reactome" id="R-RNO-210455">
    <property type="pathway name" value="Astrocytic Glutamate-Glutamine Uptake And Metabolism"/>
</dbReference>
<dbReference type="Reactome" id="R-RNO-210500">
    <property type="pathway name" value="Glutamate Neurotransmitter Release Cycle"/>
</dbReference>
<dbReference type="Reactome" id="R-RNO-425393">
    <property type="pathway name" value="Transport of inorganic cations/anions and amino acids/oligopeptides"/>
</dbReference>
<dbReference type="PRO" id="PR:P24942"/>
<dbReference type="Proteomes" id="UP000002494">
    <property type="component" value="Unplaced"/>
</dbReference>
<dbReference type="GO" id="GO:0009925">
    <property type="term" value="C:basal plasma membrane"/>
    <property type="evidence" value="ECO:0000314"/>
    <property type="project" value="ARUK-UCL"/>
</dbReference>
<dbReference type="GO" id="GO:0016323">
    <property type="term" value="C:basolateral plasma membrane"/>
    <property type="evidence" value="ECO:0000314"/>
    <property type="project" value="RGD"/>
</dbReference>
<dbReference type="GO" id="GO:0071944">
    <property type="term" value="C:cell periphery"/>
    <property type="evidence" value="ECO:0000266"/>
    <property type="project" value="RGD"/>
</dbReference>
<dbReference type="GO" id="GO:0042995">
    <property type="term" value="C:cell projection"/>
    <property type="evidence" value="ECO:0000266"/>
    <property type="project" value="RGD"/>
</dbReference>
<dbReference type="GO" id="GO:0009986">
    <property type="term" value="C:cell surface"/>
    <property type="evidence" value="ECO:0000266"/>
    <property type="project" value="RGD"/>
</dbReference>
<dbReference type="GO" id="GO:0043197">
    <property type="term" value="C:dendritic spine"/>
    <property type="evidence" value="ECO:0000314"/>
    <property type="project" value="RGD"/>
</dbReference>
<dbReference type="GO" id="GO:0098796">
    <property type="term" value="C:membrane protein complex"/>
    <property type="evidence" value="ECO:0000314"/>
    <property type="project" value="ARUK-UCL"/>
</dbReference>
<dbReference type="GO" id="GO:0005743">
    <property type="term" value="C:mitochondrial inner membrane"/>
    <property type="evidence" value="ECO:0000314"/>
    <property type="project" value="RGD"/>
</dbReference>
<dbReference type="GO" id="GO:0043005">
    <property type="term" value="C:neuron projection"/>
    <property type="evidence" value="ECO:0000314"/>
    <property type="project" value="ARUK-UCL"/>
</dbReference>
<dbReference type="GO" id="GO:0043025">
    <property type="term" value="C:neuronal cell body"/>
    <property type="evidence" value="ECO:0000314"/>
    <property type="project" value="ARUK-UCL"/>
</dbReference>
<dbReference type="GO" id="GO:0005886">
    <property type="term" value="C:plasma membrane"/>
    <property type="evidence" value="ECO:0000315"/>
    <property type="project" value="UniProtKB"/>
</dbReference>
<dbReference type="GO" id="GO:0045202">
    <property type="term" value="C:synapse"/>
    <property type="evidence" value="ECO:0000266"/>
    <property type="project" value="RGD"/>
</dbReference>
<dbReference type="GO" id="GO:0015172">
    <property type="term" value="F:acidic amino acid transmembrane transporter activity"/>
    <property type="evidence" value="ECO:0000266"/>
    <property type="project" value="RGD"/>
</dbReference>
<dbReference type="GO" id="GO:0016597">
    <property type="term" value="F:amino acid binding"/>
    <property type="evidence" value="ECO:0000266"/>
    <property type="project" value="RGD"/>
</dbReference>
<dbReference type="GO" id="GO:0016595">
    <property type="term" value="F:glutamate binding"/>
    <property type="evidence" value="ECO:0000266"/>
    <property type="project" value="RGD"/>
</dbReference>
<dbReference type="GO" id="GO:0015501">
    <property type="term" value="F:glutamate:sodium symporter activity"/>
    <property type="evidence" value="ECO:0000315"/>
    <property type="project" value="UniProtKB"/>
</dbReference>
<dbReference type="GO" id="GO:0005314">
    <property type="term" value="F:high-affinity L-glutamate transmembrane transporter activity"/>
    <property type="evidence" value="ECO:0000315"/>
    <property type="project" value="UniProtKB"/>
</dbReference>
<dbReference type="GO" id="GO:0005313">
    <property type="term" value="F:L-glutamate transmembrane transporter activity"/>
    <property type="evidence" value="ECO:0000314"/>
    <property type="project" value="RGD"/>
</dbReference>
<dbReference type="GO" id="GO:0046872">
    <property type="term" value="F:metal ion binding"/>
    <property type="evidence" value="ECO:0007669"/>
    <property type="project" value="UniProtKB-KW"/>
</dbReference>
<dbReference type="GO" id="GO:0015175">
    <property type="term" value="F:neutral L-amino acid transmembrane transporter activity"/>
    <property type="evidence" value="ECO:0000318"/>
    <property type="project" value="GO_Central"/>
</dbReference>
<dbReference type="GO" id="GO:0031223">
    <property type="term" value="P:auditory behavior"/>
    <property type="evidence" value="ECO:0000266"/>
    <property type="project" value="RGD"/>
</dbReference>
<dbReference type="GO" id="GO:0048667">
    <property type="term" value="P:cell morphogenesis involved in neuron differentiation"/>
    <property type="evidence" value="ECO:0000266"/>
    <property type="project" value="RGD"/>
</dbReference>
<dbReference type="GO" id="GO:0071314">
    <property type="term" value="P:cellular response to cocaine"/>
    <property type="evidence" value="ECO:0000266"/>
    <property type="project" value="RGD"/>
</dbReference>
<dbReference type="GO" id="GO:1902476">
    <property type="term" value="P:chloride transmembrane transport"/>
    <property type="evidence" value="ECO:0000250"/>
    <property type="project" value="UniProtKB"/>
</dbReference>
<dbReference type="GO" id="GO:0021545">
    <property type="term" value="P:cranial nerve development"/>
    <property type="evidence" value="ECO:0000266"/>
    <property type="project" value="RGD"/>
</dbReference>
<dbReference type="GO" id="GO:0070779">
    <property type="term" value="P:D-aspartate import across plasma membrane"/>
    <property type="evidence" value="ECO:0000250"/>
    <property type="project" value="UniProtKB"/>
</dbReference>
<dbReference type="GO" id="GO:0009449">
    <property type="term" value="P:gamma-aminobutyric acid biosynthetic process"/>
    <property type="evidence" value="ECO:0000266"/>
    <property type="project" value="RGD"/>
</dbReference>
<dbReference type="GO" id="GO:0006883">
    <property type="term" value="P:intracellular sodium ion homeostasis"/>
    <property type="evidence" value="ECO:0000266"/>
    <property type="project" value="RGD"/>
</dbReference>
<dbReference type="GO" id="GO:0140009">
    <property type="term" value="P:L-aspartate import across plasma membrane"/>
    <property type="evidence" value="ECO:0000315"/>
    <property type="project" value="UniProtKB"/>
</dbReference>
<dbReference type="GO" id="GO:0051938">
    <property type="term" value="P:L-glutamate import"/>
    <property type="evidence" value="ECO:0000266"/>
    <property type="project" value="RGD"/>
</dbReference>
<dbReference type="GO" id="GO:0098712">
    <property type="term" value="P:L-glutamate import across plasma membrane"/>
    <property type="evidence" value="ECO:0000315"/>
    <property type="project" value="UniProtKB"/>
</dbReference>
<dbReference type="GO" id="GO:0015813">
    <property type="term" value="P:L-glutamate transmembrane transport"/>
    <property type="evidence" value="ECO:0000314"/>
    <property type="project" value="MGI"/>
</dbReference>
<dbReference type="GO" id="GO:0043490">
    <property type="term" value="P:malate-aspartate shuttle"/>
    <property type="evidence" value="ECO:0000314"/>
    <property type="project" value="RGD"/>
</dbReference>
<dbReference type="GO" id="GO:0050885">
    <property type="term" value="P:neuromuscular process controlling balance"/>
    <property type="evidence" value="ECO:0000266"/>
    <property type="project" value="RGD"/>
</dbReference>
<dbReference type="GO" id="GO:0006836">
    <property type="term" value="P:neurotransmitter transport"/>
    <property type="evidence" value="ECO:0000304"/>
    <property type="project" value="RGD"/>
</dbReference>
<dbReference type="GO" id="GO:0050806">
    <property type="term" value="P:positive regulation of synaptic transmission"/>
    <property type="evidence" value="ECO:0000266"/>
    <property type="project" value="RGD"/>
</dbReference>
<dbReference type="GO" id="GO:0071805">
    <property type="term" value="P:potassium ion transmembrane transport"/>
    <property type="evidence" value="ECO:0000250"/>
    <property type="project" value="UniProtKB"/>
</dbReference>
<dbReference type="GO" id="GO:0046677">
    <property type="term" value="P:response to antibiotic"/>
    <property type="evidence" value="ECO:0000266"/>
    <property type="project" value="RGD"/>
</dbReference>
<dbReference type="GO" id="GO:0009416">
    <property type="term" value="P:response to light stimulus"/>
    <property type="evidence" value="ECO:0000266"/>
    <property type="project" value="RGD"/>
</dbReference>
<dbReference type="GO" id="GO:0009611">
    <property type="term" value="P:response to wounding"/>
    <property type="evidence" value="ECO:0000266"/>
    <property type="project" value="RGD"/>
</dbReference>
<dbReference type="GO" id="GO:0009410">
    <property type="term" value="P:response to xenobiotic stimulus"/>
    <property type="evidence" value="ECO:0000266"/>
    <property type="project" value="RGD"/>
</dbReference>
<dbReference type="GO" id="GO:0007605">
    <property type="term" value="P:sensory perception of sound"/>
    <property type="evidence" value="ECO:0000266"/>
    <property type="project" value="RGD"/>
</dbReference>
<dbReference type="FunFam" id="1.10.3860.10:FF:000002">
    <property type="entry name" value="Amino acid transporter"/>
    <property type="match status" value="1"/>
</dbReference>
<dbReference type="Gene3D" id="1.10.3860.10">
    <property type="entry name" value="Sodium:dicarboxylate symporter"/>
    <property type="match status" value="1"/>
</dbReference>
<dbReference type="InterPro" id="IPR050746">
    <property type="entry name" value="DAACS"/>
</dbReference>
<dbReference type="InterPro" id="IPR001991">
    <property type="entry name" value="Na-dicarboxylate_symporter"/>
</dbReference>
<dbReference type="InterPro" id="IPR018107">
    <property type="entry name" value="Na-dicarboxylate_symporter_CS"/>
</dbReference>
<dbReference type="InterPro" id="IPR036458">
    <property type="entry name" value="Na:dicarbo_symporter_sf"/>
</dbReference>
<dbReference type="PANTHER" id="PTHR11958:SF24">
    <property type="entry name" value="EXCITATORY AMINO ACID TRANSPORTER 1"/>
    <property type="match status" value="1"/>
</dbReference>
<dbReference type="PANTHER" id="PTHR11958">
    <property type="entry name" value="SODIUM/DICARBOXYLATE SYMPORTER-RELATED"/>
    <property type="match status" value="1"/>
</dbReference>
<dbReference type="Pfam" id="PF00375">
    <property type="entry name" value="SDF"/>
    <property type="match status" value="1"/>
</dbReference>
<dbReference type="PRINTS" id="PR00173">
    <property type="entry name" value="EDTRNSPORT"/>
</dbReference>
<dbReference type="SUPFAM" id="SSF118215">
    <property type="entry name" value="Proton glutamate symport protein"/>
    <property type="match status" value="1"/>
</dbReference>
<dbReference type="PROSITE" id="PS00713">
    <property type="entry name" value="NA_DICARBOXYL_SYMP_1"/>
    <property type="match status" value="1"/>
</dbReference>
<dbReference type="PROSITE" id="PS00714">
    <property type="entry name" value="NA_DICARBOXYL_SYMP_2"/>
    <property type="match status" value="1"/>
</dbReference>
<reference key="1">
    <citation type="journal article" date="1992" name="Proc. Natl. Acad. Sci. U.S.A.">
        <title>Structure, expression, and functional analysis of a Na(+)-dependent glutamate/aspartate transporter from rat brain.</title>
        <authorList>
            <person name="Storck T."/>
            <person name="Schulte S."/>
            <person name="Hofmann K.O."/>
            <person name="Stoffel W."/>
        </authorList>
    </citation>
    <scope>NUCLEOTIDE SEQUENCE [MRNA]</scope>
    <scope>FUNCTION</scope>
    <scope>SUBCELLULAR LOCATION</scope>
    <scope>TISSUE SPECIFICITY</scope>
    <source>
        <tissue>Brain</tissue>
    </source>
</reference>
<reference key="2">
    <citation type="submission" date="1992-06" db="EMBL/GenBank/DDBJ databases">
        <authorList>
            <person name="Hofmann K.O."/>
        </authorList>
    </citation>
    <scope>SEQUENCE REVISION TO 16</scope>
</reference>
<reference key="3">
    <citation type="journal article" date="1993" name="Neurosci. Res.">
        <title>Expression cloning of a rat glutamate transporter.</title>
        <authorList>
            <person name="Tanaka K."/>
        </authorList>
    </citation>
    <scope>NUCLEOTIDE SEQUENCE [MRNA]</scope>
    <scope>FUNCTION</scope>
    <scope>SUBCELLULAR LOCATION</scope>
    <scope>TISSUE SPECIFICITY</scope>
    <source>
        <tissue>Brain</tissue>
    </source>
</reference>
<reference key="4">
    <citation type="journal article" date="2000" name="FEBS Lett.">
        <title>The open reading frame of the Na(+)-dependent glutamate transporter GLAST-1 is expressed in bone and a splice variant of this molecule is expressed in bone and brain.</title>
        <authorList>
            <person name="Huggett J."/>
            <person name="Vaughan-Thomas A."/>
            <person name="Mason D."/>
        </authorList>
    </citation>
    <scope>NUCLEOTIDE SEQUENCE [MRNA]</scope>
    <scope>TISSUE SPECIFICITY</scope>
    <scope>VARIANT VAL-302</scope>
    <scope>ALTERNATIVE SPLICING</scope>
    <source>
        <strain>Wistar</strain>
        <tissue>Bone</tissue>
        <tissue>Cerebellum</tissue>
    </source>
</reference>
<reference key="5">
    <citation type="journal article" date="1995" name="Eur. J. Biochem.">
        <title>UDP galactose:ceramide galactosyltransferase and glutamate/aspartate transporter. Copurification, separation and characterization of the two glycoproteins.</title>
        <authorList>
            <person name="Schulte S."/>
            <person name="Stoffel W."/>
        </authorList>
    </citation>
    <scope>PROTEIN SEQUENCE OF 18-23; 115-121; 159-170; 231-243 AND 506-534</scope>
    <scope>GLYCOSYLATION</scope>
    <source>
        <tissue>Brain</tissue>
    </source>
</reference>
<reference key="6">
    <citation type="journal article" date="1994" name="Hear. Res.">
        <title>Identification of a glutamate/aspartate transporter in the rat cochlea.</title>
        <authorList>
            <person name="Li H.S."/>
            <person name="Niedzielski A.S."/>
            <person name="Beisel K.W."/>
            <person name="Hiel H."/>
            <person name="Wenthold R.J."/>
            <person name="Morley B.J."/>
        </authorList>
    </citation>
    <scope>NUCLEOTIDE SEQUENCE [MRNA] OF 172-501</scope>
</reference>
<reference key="7">
    <citation type="journal article" date="2012" name="Nat. Commun.">
        <title>Quantitative maps of protein phosphorylation sites across 14 different rat organs and tissues.</title>
        <authorList>
            <person name="Lundby A."/>
            <person name="Secher A."/>
            <person name="Lage K."/>
            <person name="Nordsborg N.B."/>
            <person name="Dmytriyev A."/>
            <person name="Lundby C."/>
            <person name="Olsen J.V."/>
        </authorList>
    </citation>
    <scope>PHOSPHORYLATION [LARGE SCALE ANALYSIS] AT SER-512</scope>
    <scope>IDENTIFICATION BY MASS SPECTROMETRY [LARGE SCALE ANALYSIS]</scope>
</reference>
<evidence type="ECO:0000250" key="1">
    <source>
        <dbReference type="UniProtKB" id="O57321"/>
    </source>
</evidence>
<evidence type="ECO:0000250" key="2">
    <source>
        <dbReference type="UniProtKB" id="O59010"/>
    </source>
</evidence>
<evidence type="ECO:0000250" key="3">
    <source>
        <dbReference type="UniProtKB" id="P43003"/>
    </source>
</evidence>
<evidence type="ECO:0000250" key="4">
    <source>
        <dbReference type="UniProtKB" id="P56564"/>
    </source>
</evidence>
<evidence type="ECO:0000256" key="5">
    <source>
        <dbReference type="SAM" id="MobiDB-lite"/>
    </source>
</evidence>
<evidence type="ECO:0000269" key="6">
    <source>
    </source>
</evidence>
<evidence type="ECO:0000269" key="7">
    <source>
    </source>
</evidence>
<evidence type="ECO:0000269" key="8">
    <source>
    </source>
</evidence>
<evidence type="ECO:0000269" key="9">
    <source>
    </source>
</evidence>
<evidence type="ECO:0000303" key="10">
    <source>
    </source>
</evidence>
<evidence type="ECO:0000303" key="11">
    <source>
    </source>
</evidence>
<evidence type="ECO:0000305" key="12"/>
<evidence type="ECO:0007744" key="13">
    <source>
    </source>
</evidence>
<proteinExistence type="evidence at protein level"/>
<sequence>MTKSNGEEPRMGSRMERFQQGVRKRTLLAKKKVQNITKEDVKSYLFRNAFVLLTVSAVIVGTILGFALRPYKMSYREVKYFSFPGELLMRMLQMLVLPLIISSLVTGMAALDSKASGKMGMRAVVYYMTTTIIAVVIGIIIVIIIHPGKGTKENMYREGKIVQVTAADAFLDLIRNMFPPNLVEACFKQFKTSYEKRSFKVPIQANETLLGAVINNVSEAMETLTRIREEMVPVPGSVNGVNALGLVVFSMCFGFVIGNMKEQGQALREFFDSLNEAIMRLVAVIMWYAPLGILFLIAGKILEMEDMGVIGGQLAMYTVTVIVGLLIHAVIVLPLLYFLVTRKNPWVFIGGLLQALITALGTSSSSATLPITFKCLEENNGVDKRITRFVLPVGATINMDGTALYEALAAIFIAQVNNFDLNFGQIITISITATAASIGAAGIPQAGLVTMVIVLTSVGLPTDDITLIIAVDWFLDRLRTTTNVLGDSLGAGIVEHLSRHELKNRDVEMGNSVIEENEMKKPYQLIAQDNEPEKPVADSETKM</sequence>
<name>EAA1_RAT</name>
<keyword id="KW-0025">Alternative splicing</keyword>
<keyword id="KW-0029">Amino-acid transport</keyword>
<keyword id="KW-1003">Cell membrane</keyword>
<keyword id="KW-0868">Chloride</keyword>
<keyword id="KW-0903">Direct protein sequencing</keyword>
<keyword id="KW-0325">Glycoprotein</keyword>
<keyword id="KW-0472">Membrane</keyword>
<keyword id="KW-0479">Metal-binding</keyword>
<keyword id="KW-0597">Phosphoprotein</keyword>
<keyword id="KW-0630">Potassium</keyword>
<keyword id="KW-1185">Reference proteome</keyword>
<keyword id="KW-0915">Sodium</keyword>
<keyword id="KW-0769">Symport</keyword>
<keyword id="KW-0812">Transmembrane</keyword>
<keyword id="KW-1133">Transmembrane helix</keyword>
<keyword id="KW-0813">Transport</keyword>
<accession>P24942</accession>
<accession>Q9JK43</accession>
<gene>
    <name type="primary">Slc1a3</name>
    <name type="synonym">Eaat1</name>
</gene>
<comment type="function">
    <text evidence="1 4 7 8">Sodium-dependent, high-affinity amino acid transporter that mediates the uptake of L-glutamate and also L-aspartate and D-aspartate (PubMed:1279699, PubMed:8387171). Functions as a symporter that transports one amino acid molecule together with two or three Na(+) ions and one proton, in parallel with the counter-transport of one K(+) ion (By similarity). Plays a redundant role in the rapid removal of released glutamate from the synaptic cleft, which is essential for terminating the postsynaptic action of glutamate (By similarity).</text>
</comment>
<comment type="catalytic activity">
    <reaction evidence="3">
        <text>K(+)(in) + L-glutamate(out) + 3 Na(+)(out) + H(+)(out) = K(+)(out) + L-glutamate(in) + 3 Na(+)(in) + H(+)(in)</text>
        <dbReference type="Rhea" id="RHEA:70699"/>
        <dbReference type="ChEBI" id="CHEBI:15378"/>
        <dbReference type="ChEBI" id="CHEBI:29101"/>
        <dbReference type="ChEBI" id="CHEBI:29103"/>
        <dbReference type="ChEBI" id="CHEBI:29985"/>
    </reaction>
</comment>
<comment type="catalytic activity">
    <reaction evidence="3">
        <text>K(+)(in) + L-aspartate(out) + 3 Na(+)(out) + H(+)(out) = K(+)(out) + L-aspartate(in) + 3 Na(+)(in) + H(+)(in)</text>
        <dbReference type="Rhea" id="RHEA:70851"/>
        <dbReference type="ChEBI" id="CHEBI:15378"/>
        <dbReference type="ChEBI" id="CHEBI:29101"/>
        <dbReference type="ChEBI" id="CHEBI:29103"/>
        <dbReference type="ChEBI" id="CHEBI:29991"/>
    </reaction>
</comment>
<comment type="catalytic activity">
    <reaction evidence="3">
        <text>D-aspartate(out) + K(+)(in) + 3 Na(+)(out) + H(+)(out) = D-aspartate(in) + K(+)(out) + 3 Na(+)(in) + H(+)(in)</text>
        <dbReference type="Rhea" id="RHEA:71379"/>
        <dbReference type="ChEBI" id="CHEBI:15378"/>
        <dbReference type="ChEBI" id="CHEBI:29101"/>
        <dbReference type="ChEBI" id="CHEBI:29103"/>
        <dbReference type="ChEBI" id="CHEBI:29990"/>
    </reaction>
</comment>
<comment type="subunit">
    <text evidence="3">Homotrimer (By similarity).</text>
</comment>
<comment type="subcellular location">
    <subcellularLocation>
        <location evidence="7 8">Cell membrane</location>
        <topology>Multi-pass membrane protein</topology>
    </subcellularLocation>
</comment>
<comment type="alternative products">
    <event type="alternative splicing"/>
    <isoform>
        <id>P24942-1</id>
        <name>GLAST-1</name>
        <sequence type="displayed"/>
    </isoform>
    <isoform>
        <id>P24942-2</id>
        <name>GLAST-1A</name>
        <sequence type="described" ref="VSP_006263"/>
    </isoform>
</comment>
<comment type="tissue specificity">
    <text evidence="6 7 8">Detected in brain and cerebellum (PubMed:1279699, PubMed:8387171). Both isoform GLAST-1 and GLAST-1A are expressed in bone and brain (PubMed:11086157). In brain isoform GLAST-1 is highly enriched in the Purkinje cell layer in cerebellum (PubMed:11086157).</text>
</comment>
<comment type="domain">
    <text evidence="3">Contains eight transmembrane regions plus two helical hairpins that dip into the membrane. These helical hairpin structures play an important role in the transport process. The first enters the membrane from the cytoplasmic side, the second one from the extracellular side. During the transport cycle, the regions involved in amino acid transport, and especially the helical hairpins, move vertically by about 15-18 Angstroms, alternating between exposure to the aqueous phase and reinsertion in the lipid bilayer. In contrast, the regions involved in trimerization do not move.</text>
</comment>
<comment type="PTM">
    <text evidence="9">Glycosylated.</text>
</comment>
<comment type="similarity">
    <text evidence="12">Belongs to the dicarboxylate/amino acid:cation symporter (DAACS) (TC 2.A.23) family. SLC1A3 subfamily.</text>
</comment>